<gene>
    <name evidence="1" type="primary">PB1</name>
</gene>
<keyword id="KW-1262">Eukaryotic host gene expression shutoff by virus</keyword>
<keyword id="KW-1191">Eukaryotic host transcription shutoff by virus</keyword>
<keyword id="KW-1035">Host cytoplasm</keyword>
<keyword id="KW-1190">Host gene expression shutoff by virus</keyword>
<keyword id="KW-1048">Host nucleus</keyword>
<keyword id="KW-0945">Host-virus interaction</keyword>
<keyword id="KW-1104">Inhibition of host RNA polymerase II by virus</keyword>
<keyword id="KW-0547">Nucleotide-binding</keyword>
<keyword id="KW-0548">Nucleotidyltransferase</keyword>
<keyword id="KW-0597">Phosphoprotein</keyword>
<keyword id="KW-0696">RNA-directed RNA polymerase</keyword>
<keyword id="KW-0808">Transferase</keyword>
<keyword id="KW-0693">Viral RNA replication</keyword>
<keyword id="KW-1195">Viral transcription</keyword>
<reference key="1">
    <citation type="journal article" date="1989" name="J. Virol.">
        <title>Avian-to-human transmission of the PB1 gene of influenza A viruses in the 1957 and 1968 pandemics.</title>
        <authorList>
            <person name="Kawaoka Y."/>
            <person name="Krauss S."/>
            <person name="Webster R.G."/>
        </authorList>
    </citation>
    <scope>NUCLEOTIDE SEQUENCE [GENOMIC RNA]</scope>
</reference>
<reference key="2">
    <citation type="journal article" date="2006" name="Science">
        <title>Large-scale sequence analysis of avian influenza isolates.</title>
        <authorList>
            <person name="Obenauer J.C."/>
            <person name="Denson J."/>
            <person name="Mehta P.K."/>
            <person name="Su X."/>
            <person name="Mukatira S."/>
            <person name="Finkelstein D.B."/>
            <person name="Xu X."/>
            <person name="Wang J."/>
            <person name="Ma J."/>
            <person name="Fan Y."/>
            <person name="Rakestraw K.M."/>
            <person name="Webster R.G."/>
            <person name="Hoffmann E."/>
            <person name="Krauss S."/>
            <person name="Zheng J."/>
            <person name="Zhang Z."/>
            <person name="Naeve C.W."/>
        </authorList>
    </citation>
    <scope>NUCLEOTIDE SEQUENCE [GENOMIC RNA]</scope>
</reference>
<organism>
    <name type="scientific">Influenza A virus (strain A/Turkey/Minnesota/833/1980 H4N2)</name>
    <dbReference type="NCBI Taxonomy" id="383603"/>
    <lineage>
        <taxon>Viruses</taxon>
        <taxon>Riboviria</taxon>
        <taxon>Orthornavirae</taxon>
        <taxon>Negarnaviricota</taxon>
        <taxon>Polyploviricotina</taxon>
        <taxon>Insthoviricetes</taxon>
        <taxon>Articulavirales</taxon>
        <taxon>Orthomyxoviridae</taxon>
        <taxon>Alphainfluenzavirus</taxon>
        <taxon>Alphainfluenzavirus influenzae</taxon>
        <taxon>Influenza A virus</taxon>
    </lineage>
</organism>
<comment type="function">
    <text evidence="1">RNA-dependent RNA polymerase which is responsible for replication and transcription of virus RNA segments. The transcription of viral mRNAs occurs by a unique mechanism called cap-snatching. 5' methylated caps of cellular mRNAs are cleaved after 10-13 nucleotides by PA. In turn, these short capped RNAs are used as primers by PB1 for transcription of viral mRNAs. During virus replication, PB1 initiates RNA synthesis and copy vRNA into complementary RNA (cRNA) which in turn serves as a template for the production of more vRNAs.</text>
</comment>
<comment type="catalytic activity">
    <reaction evidence="1">
        <text>RNA(n) + a ribonucleoside 5'-triphosphate = RNA(n+1) + diphosphate</text>
        <dbReference type="Rhea" id="RHEA:21248"/>
        <dbReference type="Rhea" id="RHEA-COMP:14527"/>
        <dbReference type="Rhea" id="RHEA-COMP:17342"/>
        <dbReference type="ChEBI" id="CHEBI:33019"/>
        <dbReference type="ChEBI" id="CHEBI:61557"/>
        <dbReference type="ChEBI" id="CHEBI:140395"/>
        <dbReference type="EC" id="2.7.7.48"/>
    </reaction>
</comment>
<comment type="subunit">
    <text evidence="1">Influenza RNA polymerase is composed of three subunits: PB1, PB2 and PA. Interacts (via N-terminus) with PA (via C-terminus). Interacts (via C-terminus) with PB2 (via N-terminus); this interaction is essential for transcription initiation.</text>
</comment>
<comment type="subcellular location">
    <subcellularLocation>
        <location evidence="1">Host nucleus</location>
    </subcellularLocation>
    <subcellularLocation>
        <location evidence="1">Host cytoplasm</location>
    </subcellularLocation>
</comment>
<comment type="PTM">
    <text evidence="1">Phosphorylated by host PRKCA.</text>
</comment>
<comment type="similarity">
    <text evidence="1">Belongs to the influenza viruses polymerase PB1 family.</text>
</comment>
<proteinExistence type="inferred from homology"/>
<feature type="chain" id="PRO_0000078765" description="RNA-directed RNA polymerase catalytic subunit">
    <location>
        <begin position="1"/>
        <end position="757"/>
    </location>
</feature>
<feature type="domain" description="RdRp catalytic" evidence="1">
    <location>
        <begin position="286"/>
        <end position="483"/>
    </location>
</feature>
<feature type="region of interest" description="Disordered" evidence="2">
    <location>
        <begin position="50"/>
        <end position="82"/>
    </location>
</feature>
<feature type="region of interest" description="Promoter-binding site" evidence="1">
    <location>
        <begin position="249"/>
        <end position="256"/>
    </location>
</feature>
<feature type="short sequence motif" description="Nuclear localization signal" evidence="1">
    <location>
        <begin position="187"/>
        <end position="195"/>
    </location>
</feature>
<feature type="short sequence motif" description="Nuclear localization signal" evidence="1">
    <location>
        <begin position="203"/>
        <end position="216"/>
    </location>
</feature>
<feature type="compositionally biased region" description="Polar residues" evidence="2">
    <location>
        <begin position="55"/>
        <end position="64"/>
    </location>
</feature>
<organismHost>
    <name type="scientific">Aves</name>
    <dbReference type="NCBI Taxonomy" id="8782"/>
</organismHost>
<protein>
    <recommendedName>
        <fullName evidence="1">RNA-directed RNA polymerase catalytic subunit</fullName>
        <ecNumber evidence="1">2.7.7.48</ecNumber>
    </recommendedName>
    <alternativeName>
        <fullName evidence="1">Polymerase basic protein 1</fullName>
        <shortName evidence="1">PB1</shortName>
    </alternativeName>
    <alternativeName>
        <fullName evidence="1">RNA-directed RNA polymerase subunit P1</fullName>
    </alternativeName>
</protein>
<accession>P16513</accession>
<accession>Q20NN5</accession>
<evidence type="ECO:0000255" key="1">
    <source>
        <dbReference type="HAMAP-Rule" id="MF_04065"/>
    </source>
</evidence>
<evidence type="ECO:0000256" key="2">
    <source>
        <dbReference type="SAM" id="MobiDB-lite"/>
    </source>
</evidence>
<sequence length="757" mass="86480">MDVNPTLLFLKVPAQNAISTTFPYTGDPPYSHGTGTGYTMDTVNRTHQYSEKGKWTTNTETGAPQLNPIDGPLPEDNEPSGYAQTDCVLEAMAFLEESHPGIFENSCLETMEVVQQTRVDKLTQGRQTYDWTLNRNQPAATALANTIEVFRSNGLTANESGRLIDFLKDVMESMDKEEMEITTHFQRKRRVRDNMTKKMVTQRTIGKKKQRLNKRSYLIRALTLNTMTKDAERGKLKRRAIATPGMQIRGFVYFVETLARSICEKLEQSGLPVGGNEKKAKLANVVRKMMTNSQDTELSFTITGDNTKWNENQNPRMFLAMITYITRNQPEWFRNVLSIAPIMFSNKMARLGKGYMFESKSMKLRTQIPAEMLANIDLKYFNESTRKKIEKIRPLLIDGTASLSPGMMMGMFNMLSTVLGVSILNLGQKRYTKTTYWWDGLQSSDDFALIVNAPNHEGIQAGVDRFYRTCKLVGINMSKKKSYINRTGTFEFTSFFYRYGFVANFSMELPSFGVSGINESADMSIGVTVIKNNMINNDLGPATAQMALQLFIKDYRYTYRCHRGDTQIQTRRSFELKKLWEQTRSKAGLLVSDGGPNLYNIRNLHIPEVCLKWELMDEDYQGRLCNPLNPFVSHKEIESVNNAVVMPAHGPAKNMEYDAVATTHSWIPKRNRSILNTSQRGILEDEQMYQKCCNLFEKFFPSSSYRRPVGISSMVEAMVSRARIDARIDFESGRIKKEEFAEIMKICSTIEELRRQK</sequence>
<name>RDRP_I80A8</name>
<dbReference type="EC" id="2.7.7.48" evidence="1"/>
<dbReference type="EMBL" id="M25925">
    <property type="protein sequence ID" value="AAA43634.1"/>
    <property type="molecule type" value="Genomic_RNA"/>
</dbReference>
<dbReference type="EMBL" id="CY005912">
    <property type="protein sequence ID" value="ABB21827.1"/>
    <property type="molecule type" value="Viral_cRNA"/>
</dbReference>
<dbReference type="SMR" id="P16513"/>
<dbReference type="Proteomes" id="UP000008579">
    <property type="component" value="Genome"/>
</dbReference>
<dbReference type="GO" id="GO:0030430">
    <property type="term" value="C:host cell cytoplasm"/>
    <property type="evidence" value="ECO:0007669"/>
    <property type="project" value="UniProtKB-SubCell"/>
</dbReference>
<dbReference type="GO" id="GO:0042025">
    <property type="term" value="C:host cell nucleus"/>
    <property type="evidence" value="ECO:0007669"/>
    <property type="project" value="UniProtKB-SubCell"/>
</dbReference>
<dbReference type="GO" id="GO:0000166">
    <property type="term" value="F:nucleotide binding"/>
    <property type="evidence" value="ECO:0007669"/>
    <property type="project" value="UniProtKB-UniRule"/>
</dbReference>
<dbReference type="GO" id="GO:0003723">
    <property type="term" value="F:RNA binding"/>
    <property type="evidence" value="ECO:0007669"/>
    <property type="project" value="InterPro"/>
</dbReference>
<dbReference type="GO" id="GO:0003968">
    <property type="term" value="F:RNA-directed RNA polymerase activity"/>
    <property type="evidence" value="ECO:0007669"/>
    <property type="project" value="UniProtKB-UniRule"/>
</dbReference>
<dbReference type="GO" id="GO:0006351">
    <property type="term" value="P:DNA-templated transcription"/>
    <property type="evidence" value="ECO:0007669"/>
    <property type="project" value="UniProtKB-UniRule"/>
</dbReference>
<dbReference type="GO" id="GO:0039657">
    <property type="term" value="P:symbiont-mediated suppression of host gene expression"/>
    <property type="evidence" value="ECO:0007669"/>
    <property type="project" value="UniProtKB-KW"/>
</dbReference>
<dbReference type="GO" id="GO:0039523">
    <property type="term" value="P:symbiont-mediated suppression of host mRNA transcription via inhibition of RNA polymerase II activity"/>
    <property type="evidence" value="ECO:0007669"/>
    <property type="project" value="UniProtKB-UniRule"/>
</dbReference>
<dbReference type="GO" id="GO:0039694">
    <property type="term" value="P:viral RNA genome replication"/>
    <property type="evidence" value="ECO:0007669"/>
    <property type="project" value="UniProtKB-UniRule"/>
</dbReference>
<dbReference type="GO" id="GO:0019083">
    <property type="term" value="P:viral transcription"/>
    <property type="evidence" value="ECO:0007669"/>
    <property type="project" value="UniProtKB-KW"/>
</dbReference>
<dbReference type="Gene3D" id="6.10.140.720">
    <property type="match status" value="1"/>
</dbReference>
<dbReference type="HAMAP" id="MF_04065">
    <property type="entry name" value="INFV_RDRP"/>
    <property type="match status" value="1"/>
</dbReference>
<dbReference type="InterPro" id="IPR007099">
    <property type="entry name" value="RNA-dir_pol_NSvirus"/>
</dbReference>
<dbReference type="InterPro" id="IPR001407">
    <property type="entry name" value="RNA_pol_PB1_influenza"/>
</dbReference>
<dbReference type="Pfam" id="PF00602">
    <property type="entry name" value="Flu_PB1"/>
    <property type="match status" value="1"/>
</dbReference>
<dbReference type="PIRSF" id="PIRSF000827">
    <property type="entry name" value="RdRPol_OMV"/>
    <property type="match status" value="1"/>
</dbReference>
<dbReference type="PROSITE" id="PS50525">
    <property type="entry name" value="RDRP_SSRNA_NEG_SEG"/>
    <property type="match status" value="1"/>
</dbReference>